<keyword id="KW-0472">Membrane</keyword>
<keyword id="KW-1185">Reference proteome</keyword>
<keyword id="KW-0812">Transmembrane</keyword>
<keyword id="KW-1133">Transmembrane helix</keyword>
<accession>P40534</accession>
<accession>D6VVP5</accession>
<comment type="subcellular location">
    <subcellularLocation>
        <location evidence="3">Membrane</location>
        <topology evidence="3">Multi-pass membrane protein</topology>
    </subcellularLocation>
</comment>
<comment type="induction">
    <text evidence="2">By pheromone.</text>
</comment>
<evidence type="ECO:0000255" key="1"/>
<evidence type="ECO:0000269" key="2">
    <source>
    </source>
</evidence>
<evidence type="ECO:0000305" key="3"/>
<gene>
    <name type="primary">PRM2</name>
    <name type="ordered locus">YIL037C</name>
</gene>
<organism>
    <name type="scientific">Saccharomyces cerevisiae (strain ATCC 204508 / S288c)</name>
    <name type="common">Baker's yeast</name>
    <dbReference type="NCBI Taxonomy" id="559292"/>
    <lineage>
        <taxon>Eukaryota</taxon>
        <taxon>Fungi</taxon>
        <taxon>Dikarya</taxon>
        <taxon>Ascomycota</taxon>
        <taxon>Saccharomycotina</taxon>
        <taxon>Saccharomycetes</taxon>
        <taxon>Saccharomycetales</taxon>
        <taxon>Saccharomycetaceae</taxon>
        <taxon>Saccharomyces</taxon>
    </lineage>
</organism>
<reference key="1">
    <citation type="journal article" date="1997" name="Nature">
        <title>The nucleotide sequence of Saccharomyces cerevisiae chromosome IX.</title>
        <authorList>
            <person name="Churcher C.M."/>
            <person name="Bowman S."/>
            <person name="Badcock K."/>
            <person name="Bankier A.T."/>
            <person name="Brown D."/>
            <person name="Chillingworth T."/>
            <person name="Connor R."/>
            <person name="Devlin K."/>
            <person name="Gentles S."/>
            <person name="Hamlin N."/>
            <person name="Harris D.E."/>
            <person name="Horsnell T."/>
            <person name="Hunt S."/>
            <person name="Jagels K."/>
            <person name="Jones M."/>
            <person name="Lye G."/>
            <person name="Moule S."/>
            <person name="Odell C."/>
            <person name="Pearson D."/>
            <person name="Rajandream M.A."/>
            <person name="Rice P."/>
            <person name="Rowley N."/>
            <person name="Skelton J."/>
            <person name="Smith V."/>
            <person name="Walsh S.V."/>
            <person name="Whitehead S."/>
            <person name="Barrell B.G."/>
        </authorList>
    </citation>
    <scope>NUCLEOTIDE SEQUENCE [LARGE SCALE GENOMIC DNA]</scope>
    <source>
        <strain>ATCC 204508 / S288c</strain>
    </source>
</reference>
<reference key="2">
    <citation type="journal article" date="2014" name="G3 (Bethesda)">
        <title>The reference genome sequence of Saccharomyces cerevisiae: Then and now.</title>
        <authorList>
            <person name="Engel S.R."/>
            <person name="Dietrich F.S."/>
            <person name="Fisk D.G."/>
            <person name="Binkley G."/>
            <person name="Balakrishnan R."/>
            <person name="Costanzo M.C."/>
            <person name="Dwight S.S."/>
            <person name="Hitz B.C."/>
            <person name="Karra K."/>
            <person name="Nash R.S."/>
            <person name="Weng S."/>
            <person name="Wong E.D."/>
            <person name="Lloyd P."/>
            <person name="Skrzypek M.S."/>
            <person name="Miyasato S.R."/>
            <person name="Simison M."/>
            <person name="Cherry J.M."/>
        </authorList>
    </citation>
    <scope>GENOME REANNOTATION</scope>
    <source>
        <strain>ATCC 204508 / S288c</strain>
    </source>
</reference>
<reference key="3">
    <citation type="journal article" date="2000" name="J. Cell Biol.">
        <title>Prm1p, a pheromone-regulated multispanning membrane protein, facilitates plasma membrane fusion during yeast mating.</title>
        <authorList>
            <person name="Heiman M.G."/>
            <person name="Walter P."/>
        </authorList>
    </citation>
    <scope>NOMENCLATURE</scope>
    <scope>INDUCTION</scope>
</reference>
<proteinExistence type="evidence at transcript level"/>
<feature type="chain" id="PRO_0000202994" description="Pheromone-regulated membrane protein 2">
    <location>
        <begin position="1"/>
        <end position="656"/>
    </location>
</feature>
<feature type="transmembrane region" description="Helical" evidence="1">
    <location>
        <begin position="16"/>
        <end position="36"/>
    </location>
</feature>
<feature type="transmembrane region" description="Helical" evidence="1">
    <location>
        <begin position="320"/>
        <end position="340"/>
    </location>
</feature>
<feature type="transmembrane region" description="Helical" evidence="1">
    <location>
        <begin position="422"/>
        <end position="442"/>
    </location>
</feature>
<feature type="transmembrane region" description="Helical" evidence="1">
    <location>
        <begin position="634"/>
        <end position="654"/>
    </location>
</feature>
<sequence length="656" mass="75021">MNNVHIIKPLSLPQRFFSCIFHPLLLIFFTSVILTIWGSFSVIDITMAKMSHAQVKRNDTVSTFASISTATATATTTATTTATMTAVTTQHAIYSANSYSLNKTFIDNTIDQYFESKLRSIESTVGTDMQEKFKSYTDDILDNKQKLINDQISLETELIKEVLEVNNTIFNELLTKSQLINDTWNEISEDAMTIDKDSISQMASNLLLNYSMFDSIFGNYSRKLKSLQNFNGTITDFSTQLDTSSTLSLNFLRNSTDWLQLKRNFTANLQNEISILSGGSTEVTSSTSIIKRSLKTNSEENSVLSAVKNHVFRKCKRMTIIFTVMYFAFVILLMAIERILFQLENQQVNLVMSQINGLTGQTNFTKYNKVLKSLITTLNLSTLYPIPYQLTKLINQKIFKREPEKIDDKKVKKSKLFYCNWWIISNGAHLWLFGFLMLLIHWQIVTRLTNFEVPSLPTFHKRAGPSLYKREVWTDGNITTTIEGFINDSVSLLCENFQMEVNEKFITANLSLQTDPNLKVQSTDILNLWVNDTNTQFEKYLNESSQNWQGIDLQVEPLLGSDSINEFLGQYFLPTYEVTNTNSSFALDIQKYGIINRGINITNASVAALSSLSKRQIKDKEQKQTYFLHTVYKWGLLAVCLTILFHHMLIFIILKL</sequence>
<protein>
    <recommendedName>
        <fullName>Pheromone-regulated membrane protein 2</fullName>
    </recommendedName>
</protein>
<name>PRM2_YEAST</name>
<dbReference type="EMBL" id="Z46861">
    <property type="protein sequence ID" value="CAA86914.1"/>
    <property type="molecule type" value="Genomic_DNA"/>
</dbReference>
<dbReference type="EMBL" id="BK006942">
    <property type="protein sequence ID" value="DAA08511.1"/>
    <property type="molecule type" value="Genomic_DNA"/>
</dbReference>
<dbReference type="PIR" id="S49941">
    <property type="entry name" value="S49941"/>
</dbReference>
<dbReference type="RefSeq" id="NP_012227.3">
    <property type="nucleotide sequence ID" value="NM_001179387.3"/>
</dbReference>
<dbReference type="SMR" id="P40534"/>
<dbReference type="BioGRID" id="34953">
    <property type="interactions" value="113"/>
</dbReference>
<dbReference type="DIP" id="DIP-6544N"/>
<dbReference type="FunCoup" id="P40534">
    <property type="interactions" value="119"/>
</dbReference>
<dbReference type="IntAct" id="P40534">
    <property type="interactions" value="3"/>
</dbReference>
<dbReference type="STRING" id="4932.YIL037C"/>
<dbReference type="iPTMnet" id="P40534"/>
<dbReference type="PaxDb" id="4932-YIL037C"/>
<dbReference type="PeptideAtlas" id="P40534"/>
<dbReference type="EnsemblFungi" id="YIL037C_mRNA">
    <property type="protein sequence ID" value="YIL037C"/>
    <property type="gene ID" value="YIL037C"/>
</dbReference>
<dbReference type="GeneID" id="854774"/>
<dbReference type="KEGG" id="sce:YIL037C"/>
<dbReference type="AGR" id="SGD:S000001299"/>
<dbReference type="SGD" id="S000001299">
    <property type="gene designation" value="PRM2"/>
</dbReference>
<dbReference type="VEuPathDB" id="FungiDB:YIL037C"/>
<dbReference type="eggNOG" id="ENOG502S7IH">
    <property type="taxonomic scope" value="Eukaryota"/>
</dbReference>
<dbReference type="HOGENOM" id="CLU_448477_0_0_1"/>
<dbReference type="InParanoid" id="P40534"/>
<dbReference type="OMA" id="HINTARK"/>
<dbReference type="OrthoDB" id="4053833at2759"/>
<dbReference type="BioCyc" id="YEAST:G3O-31309-MONOMER"/>
<dbReference type="BioGRID-ORCS" id="854774">
    <property type="hits" value="0 hits in 10 CRISPR screens"/>
</dbReference>
<dbReference type="PRO" id="PR:P40534"/>
<dbReference type="Proteomes" id="UP000002311">
    <property type="component" value="Chromosome IX"/>
</dbReference>
<dbReference type="RNAct" id="P40534">
    <property type="molecule type" value="protein"/>
</dbReference>
<dbReference type="GO" id="GO:0016020">
    <property type="term" value="C:membrane"/>
    <property type="evidence" value="ECO:0007669"/>
    <property type="project" value="UniProtKB-SubCell"/>
</dbReference>
<dbReference type="GO" id="GO:0000742">
    <property type="term" value="P:karyogamy involved in conjugation with cellular fusion"/>
    <property type="evidence" value="ECO:0000315"/>
    <property type="project" value="SGD"/>
</dbReference>